<dbReference type="EC" id="1.1.1.355"/>
<dbReference type="EMBL" id="AJ582817">
    <property type="protein sequence ID" value="CAE46945.1"/>
    <property type="status" value="ALT_INIT"/>
    <property type="molecule type" value="Genomic_DNA"/>
</dbReference>
<dbReference type="EMBL" id="AB164642">
    <property type="protein sequence ID" value="BAD20766.1"/>
    <property type="molecule type" value="Genomic_DNA"/>
</dbReference>
<dbReference type="EMBL" id="AJ628422">
    <property type="protein sequence ID" value="CAF31595.1"/>
    <property type="status" value="ALT_INIT"/>
    <property type="molecule type" value="Genomic_DNA"/>
</dbReference>
<dbReference type="SMR" id="Q2MFU6"/>
<dbReference type="KEGG" id="ag:BAD20766"/>
<dbReference type="BioCyc" id="MetaCyc:MONOMER-17981"/>
<dbReference type="BRENDA" id="1.1.1.355">
    <property type="organism ID" value="6046"/>
</dbReference>
<dbReference type="UniPathway" id="UPA00965"/>
<dbReference type="GO" id="GO:0005737">
    <property type="term" value="C:cytoplasm"/>
    <property type="evidence" value="ECO:0007669"/>
    <property type="project" value="TreeGrafter"/>
</dbReference>
<dbReference type="GO" id="GO:0004029">
    <property type="term" value="F:aldehyde dehydrogenase (NAD+) activity"/>
    <property type="evidence" value="ECO:0007669"/>
    <property type="project" value="TreeGrafter"/>
</dbReference>
<dbReference type="GO" id="GO:0016616">
    <property type="term" value="F:oxidoreductase activity, acting on the CH-OH group of donors, NAD or NADP as acceptor"/>
    <property type="evidence" value="ECO:0000314"/>
    <property type="project" value="UniProtKB"/>
</dbReference>
<dbReference type="GO" id="GO:1901133">
    <property type="term" value="P:kanamycin biosynthetic process"/>
    <property type="evidence" value="ECO:0000314"/>
    <property type="project" value="UniProtKB"/>
</dbReference>
<dbReference type="Gene3D" id="3.40.50.720">
    <property type="entry name" value="NAD(P)-binding Rossmann-like Domain"/>
    <property type="match status" value="1"/>
</dbReference>
<dbReference type="InterPro" id="IPR001509">
    <property type="entry name" value="Epimerase_deHydtase"/>
</dbReference>
<dbReference type="InterPro" id="IPR036291">
    <property type="entry name" value="NAD(P)-bd_dom_sf"/>
</dbReference>
<dbReference type="InterPro" id="IPR051783">
    <property type="entry name" value="NAD(P)-dependent_oxidoreduct"/>
</dbReference>
<dbReference type="PANTHER" id="PTHR48079:SF6">
    <property type="entry name" value="NAD(P)-BINDING DOMAIN-CONTAINING PROTEIN-RELATED"/>
    <property type="match status" value="1"/>
</dbReference>
<dbReference type="PANTHER" id="PTHR48079">
    <property type="entry name" value="PROTEIN YEEZ"/>
    <property type="match status" value="1"/>
</dbReference>
<dbReference type="Pfam" id="PF01370">
    <property type="entry name" value="Epimerase"/>
    <property type="match status" value="1"/>
</dbReference>
<dbReference type="SUPFAM" id="SSF51735">
    <property type="entry name" value="NAD(P)-binding Rossmann-fold domains"/>
    <property type="match status" value="1"/>
</dbReference>
<comment type="function">
    <text evidence="1">Mediates the conversion of 2'-dehydrokanamycin A into kanamycin A.</text>
</comment>
<comment type="catalytic activity">
    <reaction evidence="1">
        <text>2'-dehydrokanamycin A + NADPH + H(+) = kanamycin A + NADP(+)</text>
        <dbReference type="Rhea" id="RHEA:35835"/>
        <dbReference type="ChEBI" id="CHEBI:15378"/>
        <dbReference type="ChEBI" id="CHEBI:57783"/>
        <dbReference type="ChEBI" id="CHEBI:58214"/>
        <dbReference type="ChEBI" id="CHEBI:58349"/>
        <dbReference type="ChEBI" id="CHEBI:72757"/>
        <dbReference type="EC" id="1.1.1.355"/>
    </reaction>
</comment>
<comment type="pathway">
    <text evidence="1">Antibiotic biosynthesis; kanamycin biosynthesis.</text>
</comment>
<comment type="similarity">
    <text evidence="2">Belongs to the NAD(P)-dependent epimerase/dehydratase family.</text>
</comment>
<comment type="sequence caution" evidence="2">
    <conflict type="erroneous initiation">
        <sequence resource="EMBL-CDS" id="CAE46945"/>
    </conflict>
    <text>Truncated N-terminus.</text>
</comment>
<comment type="sequence caution" evidence="2">
    <conflict type="erroneous initiation">
        <sequence resource="EMBL-CDS" id="CAF31595"/>
    </conflict>
    <text>Truncated N-terminus.</text>
</comment>
<feature type="chain" id="PRO_0000424127" description="2'-dehydrokanamycin reductase">
    <location>
        <begin position="1"/>
        <end position="352"/>
    </location>
</feature>
<keyword id="KW-0045">Antibiotic biosynthesis</keyword>
<keyword id="KW-0521">NADP</keyword>
<keyword id="KW-0560">Oxidoreductase</keyword>
<protein>
    <recommendedName>
        <fullName>2'-dehydrokanamycin reductase</fullName>
        <ecNumber>1.1.1.355</ecNumber>
    </recommendedName>
    <alternativeName>
        <fullName>Kanamycin biosynthesis protein K</fullName>
    </alternativeName>
</protein>
<organism>
    <name type="scientific">Streptomyces kanamyceticus</name>
    <dbReference type="NCBI Taxonomy" id="1967"/>
    <lineage>
        <taxon>Bacteria</taxon>
        <taxon>Bacillati</taxon>
        <taxon>Actinomycetota</taxon>
        <taxon>Actinomycetes</taxon>
        <taxon>Kitasatosporales</taxon>
        <taxon>Streptomycetaceae</taxon>
        <taxon>Streptomyces</taxon>
    </lineage>
</organism>
<proteinExistence type="evidence at protein level"/>
<accession>Q2MFU6</accession>
<accession>Q65CC3</accession>
<accession>Q6L731</accession>
<evidence type="ECO:0000269" key="1">
    <source>
    </source>
</evidence>
<evidence type="ECO:0000305" key="2"/>
<reference key="1">
    <citation type="journal article" date="2004" name="Arch. Biochem. Biophys.">
        <title>A gene cluster for biosynthesis of kanamycin from Streptomyces kanamyceticus: comparison with gentamicin biosynthetic gene cluster.</title>
        <authorList>
            <person name="Kharel M.K."/>
            <person name="Subba B."/>
            <person name="Basnet D.B."/>
            <person name="Woo J.S."/>
            <person name="Lee H.C."/>
            <person name="Liou K."/>
            <person name="Sohng J.K."/>
        </authorList>
    </citation>
    <scope>NUCLEOTIDE SEQUENCE [GENOMIC DNA]</scope>
    <source>
        <strain>ATCC 12853 / DSM 40500 / NBRC 13414 / NCIMB 9343 / NRRL B-2535 / VKM Ac-837</strain>
    </source>
</reference>
<reference key="2">
    <citation type="journal article" date="2004" name="J. Antibiot.">
        <title>The kanamycin biosynthetic gene cluster from Streptomyces kanamyceticus.</title>
        <authorList>
            <person name="Yanai K."/>
            <person name="Murakami T."/>
        </authorList>
    </citation>
    <scope>NUCLEOTIDE SEQUENCE [GENOMIC DNA]</scope>
    <source>
        <strain>21-18</strain>
    </source>
</reference>
<reference key="3">
    <citation type="submission" date="2004-02" db="EMBL/GenBank/DDBJ databases">
        <title>Cloning and sequencing of the kanamycin biosynthetic gene cluster from Streptomyces kanamyceticus DSM 40500.</title>
        <authorList>
            <person name="Aboshanab K.M.A."/>
            <person name="Schmidt-Beissner H."/>
            <person name="Wehmeier U.F."/>
            <person name="Welzel K."/>
            <person name="Vente A."/>
            <person name="Piepersberg W."/>
        </authorList>
    </citation>
    <scope>NUCLEOTIDE SEQUENCE [GENOMIC DNA]</scope>
    <source>
        <strain>ATCC 12853 / DSM 40500 / NBRC 13414 / NCIMB 9343 / NRRL B-2535 / VKM Ac-837</strain>
    </source>
</reference>
<reference key="4">
    <citation type="journal article" date="2012" name="Angew. Chem. Int. Ed.">
        <title>The last step of kanamycin biosynthesis: unique deamination reaction catalyzed by the alpha-ketoglutarate-dependent nonheme iron dioxygenase KanJ and the NADPH-dependent reductase KanK.</title>
        <authorList>
            <person name="Sucipto H."/>
            <person name="Kudo F."/>
            <person name="Eguchi T."/>
        </authorList>
    </citation>
    <scope>FUNCTION</scope>
    <scope>CATALYTIC ACTIVITY</scope>
    <scope>PATHWAY</scope>
    <source>
        <strain>ATCC 12853 / DSM 40500 / NBRC 13414 / NCIMB 9343 / NRRL B-2535 / VKM Ac-837</strain>
    </source>
</reference>
<gene>
    <name type="primary">kanK</name>
    <name type="synonym">kacC</name>
</gene>
<name>KANK_STRKN</name>
<sequence>MSSQLALRGPELSANLCKPEEDTLRVLVTGGSGNVGVGVVRALNAARHHVVVASRGYSPALLPEGVRAVRLERTEPDAYTRLVAAEKPDAVIDLTCHDAADAAVTLRACAGVDRVVVVSSVTAAGPATTTPVTEATAAPPLSEYGIDKLAVEETVRAAWADGTSQALLVRLGAVYRLGADLDGQLAEDGCWLAHAAAGAPAVLADDGAARWNLLHADDAGAALAELLANDRARGVLVHLASRHPLPWRELYERVHHALGRPFNPVSVPAEWAAEQLEDAEFLAETSRWDQVFDLGLLDRLAPSYQERGGPSRVTEVALWLIRQGRVGDAELGAEIQELPARLAAVRTAPGLV</sequence>